<dbReference type="EMBL" id="AAFI02000194">
    <property type="protein sequence ID" value="EAL61097.1"/>
    <property type="molecule type" value="Genomic_DNA"/>
</dbReference>
<dbReference type="RefSeq" id="XP_629510.1">
    <property type="nucleotide sequence ID" value="XM_629508.1"/>
</dbReference>
<dbReference type="FunCoup" id="Q54D10">
    <property type="interactions" value="930"/>
</dbReference>
<dbReference type="STRING" id="44689.Q54D10"/>
<dbReference type="PaxDb" id="44689-DDB0266508"/>
<dbReference type="EnsemblProtists" id="EAL61097">
    <property type="protein sequence ID" value="EAL61097"/>
    <property type="gene ID" value="DDB_G0292588"/>
</dbReference>
<dbReference type="GeneID" id="8628761"/>
<dbReference type="KEGG" id="ddi:DDB_G0292588"/>
<dbReference type="dictyBase" id="DDB_G0292588">
    <property type="gene designation" value="rer1"/>
</dbReference>
<dbReference type="VEuPathDB" id="AmoebaDB:DDB_G0292588"/>
<dbReference type="eggNOG" id="KOG1688">
    <property type="taxonomic scope" value="Eukaryota"/>
</dbReference>
<dbReference type="HOGENOM" id="CLU_074889_0_0_1"/>
<dbReference type="InParanoid" id="Q54D10"/>
<dbReference type="OMA" id="IDKWIMH"/>
<dbReference type="PhylomeDB" id="Q54D10"/>
<dbReference type="PRO" id="PR:Q54D10"/>
<dbReference type="Proteomes" id="UP000002195">
    <property type="component" value="Chromosome 6"/>
</dbReference>
<dbReference type="GO" id="GO:0005783">
    <property type="term" value="C:endoplasmic reticulum"/>
    <property type="evidence" value="ECO:0007669"/>
    <property type="project" value="GOC"/>
</dbReference>
<dbReference type="GO" id="GO:0000139">
    <property type="term" value="C:Golgi membrane"/>
    <property type="evidence" value="ECO:0000318"/>
    <property type="project" value="GO_Central"/>
</dbReference>
<dbReference type="GO" id="GO:0006621">
    <property type="term" value="P:protein retention in ER lumen"/>
    <property type="evidence" value="ECO:0000318"/>
    <property type="project" value="GO_Central"/>
</dbReference>
<dbReference type="GO" id="GO:0015031">
    <property type="term" value="P:protein transport"/>
    <property type="evidence" value="ECO:0007669"/>
    <property type="project" value="UniProtKB-KW"/>
</dbReference>
<dbReference type="GO" id="GO:0006890">
    <property type="term" value="P:retrograde vesicle-mediated transport, Golgi to endoplasmic reticulum"/>
    <property type="evidence" value="ECO:0000318"/>
    <property type="project" value="GO_Central"/>
</dbReference>
<dbReference type="InterPro" id="IPR004932">
    <property type="entry name" value="Rer1"/>
</dbReference>
<dbReference type="PANTHER" id="PTHR10743">
    <property type="entry name" value="PROTEIN RER1"/>
    <property type="match status" value="1"/>
</dbReference>
<dbReference type="PANTHER" id="PTHR10743:SF0">
    <property type="entry name" value="PROTEIN RER1"/>
    <property type="match status" value="1"/>
</dbReference>
<dbReference type="Pfam" id="PF03248">
    <property type="entry name" value="Rer1"/>
    <property type="match status" value="1"/>
</dbReference>
<dbReference type="PIRSF" id="PIRSF016013">
    <property type="entry name" value="AtER_Rer1p"/>
    <property type="match status" value="1"/>
</dbReference>
<gene>
    <name type="primary">rer1</name>
    <name type="ORF">DDB_G0292588</name>
</gene>
<keyword id="KW-0472">Membrane</keyword>
<keyword id="KW-0653">Protein transport</keyword>
<keyword id="KW-1185">Reference proteome</keyword>
<keyword id="KW-0812">Transmembrane</keyword>
<keyword id="KW-1133">Transmembrane helix</keyword>
<keyword id="KW-0813">Transport</keyword>
<sequence>MPTTIDEGLPAPHNFVSFTTLIARKYQNLIEKTISFIPQRWAFVGFLSFLYILRVSLSSGGWYVITYALGIFLLTRFIAFLSPKWDPELEEDSGDSLPTTLNRNDDEAKPFIRRLPEFLFWHSIFKALFISIFCTFIPFLDLPVFWPILLLYFIIIFSVTMKKQIKHMIKYKYIPFTVGKKTYTKNNS</sequence>
<reference key="1">
    <citation type="journal article" date="2005" name="Nature">
        <title>The genome of the social amoeba Dictyostelium discoideum.</title>
        <authorList>
            <person name="Eichinger L."/>
            <person name="Pachebat J.A."/>
            <person name="Gloeckner G."/>
            <person name="Rajandream M.A."/>
            <person name="Sucgang R."/>
            <person name="Berriman M."/>
            <person name="Song J."/>
            <person name="Olsen R."/>
            <person name="Szafranski K."/>
            <person name="Xu Q."/>
            <person name="Tunggal B."/>
            <person name="Kummerfeld S."/>
            <person name="Madera M."/>
            <person name="Konfortov B.A."/>
            <person name="Rivero F."/>
            <person name="Bankier A.T."/>
            <person name="Lehmann R."/>
            <person name="Hamlin N."/>
            <person name="Davies R."/>
            <person name="Gaudet P."/>
            <person name="Fey P."/>
            <person name="Pilcher K."/>
            <person name="Chen G."/>
            <person name="Saunders D."/>
            <person name="Sodergren E.J."/>
            <person name="Davis P."/>
            <person name="Kerhornou A."/>
            <person name="Nie X."/>
            <person name="Hall N."/>
            <person name="Anjard C."/>
            <person name="Hemphill L."/>
            <person name="Bason N."/>
            <person name="Farbrother P."/>
            <person name="Desany B."/>
            <person name="Just E."/>
            <person name="Morio T."/>
            <person name="Rost R."/>
            <person name="Churcher C.M."/>
            <person name="Cooper J."/>
            <person name="Haydock S."/>
            <person name="van Driessche N."/>
            <person name="Cronin A."/>
            <person name="Goodhead I."/>
            <person name="Muzny D.M."/>
            <person name="Mourier T."/>
            <person name="Pain A."/>
            <person name="Lu M."/>
            <person name="Harper D."/>
            <person name="Lindsay R."/>
            <person name="Hauser H."/>
            <person name="James K.D."/>
            <person name="Quiles M."/>
            <person name="Madan Babu M."/>
            <person name="Saito T."/>
            <person name="Buchrieser C."/>
            <person name="Wardroper A."/>
            <person name="Felder M."/>
            <person name="Thangavelu M."/>
            <person name="Johnson D."/>
            <person name="Knights A."/>
            <person name="Loulseged H."/>
            <person name="Mungall K.L."/>
            <person name="Oliver K."/>
            <person name="Price C."/>
            <person name="Quail M.A."/>
            <person name="Urushihara H."/>
            <person name="Hernandez J."/>
            <person name="Rabbinowitsch E."/>
            <person name="Steffen D."/>
            <person name="Sanders M."/>
            <person name="Ma J."/>
            <person name="Kohara Y."/>
            <person name="Sharp S."/>
            <person name="Simmonds M.N."/>
            <person name="Spiegler S."/>
            <person name="Tivey A."/>
            <person name="Sugano S."/>
            <person name="White B."/>
            <person name="Walker D."/>
            <person name="Woodward J.R."/>
            <person name="Winckler T."/>
            <person name="Tanaka Y."/>
            <person name="Shaulsky G."/>
            <person name="Schleicher M."/>
            <person name="Weinstock G.M."/>
            <person name="Rosenthal A."/>
            <person name="Cox E.C."/>
            <person name="Chisholm R.L."/>
            <person name="Gibbs R.A."/>
            <person name="Loomis W.F."/>
            <person name="Platzer M."/>
            <person name="Kay R.R."/>
            <person name="Williams J.G."/>
            <person name="Dear P.H."/>
            <person name="Noegel A.A."/>
            <person name="Barrell B.G."/>
            <person name="Kuspa A."/>
        </authorList>
    </citation>
    <scope>NUCLEOTIDE SEQUENCE [LARGE SCALE GENOMIC DNA]</scope>
    <source>
        <strain>AX4</strain>
    </source>
</reference>
<organism>
    <name type="scientific">Dictyostelium discoideum</name>
    <name type="common">Social amoeba</name>
    <dbReference type="NCBI Taxonomy" id="44689"/>
    <lineage>
        <taxon>Eukaryota</taxon>
        <taxon>Amoebozoa</taxon>
        <taxon>Evosea</taxon>
        <taxon>Eumycetozoa</taxon>
        <taxon>Dictyostelia</taxon>
        <taxon>Dictyosteliales</taxon>
        <taxon>Dictyosteliaceae</taxon>
        <taxon>Dictyostelium</taxon>
    </lineage>
</organism>
<protein>
    <recommendedName>
        <fullName>Protein RER1 homolog</fullName>
    </recommendedName>
</protein>
<evidence type="ECO:0000250" key="1"/>
<evidence type="ECO:0000255" key="2"/>
<evidence type="ECO:0000305" key="3"/>
<comment type="function">
    <text evidence="1">May be involved in protein transport along the secretory pathway.</text>
</comment>
<comment type="subcellular location">
    <subcellularLocation>
        <location evidence="3">Membrane</location>
        <topology evidence="3">Multi-pass membrane protein</topology>
    </subcellularLocation>
</comment>
<comment type="similarity">
    <text evidence="3">Belongs to the RER1 family.</text>
</comment>
<feature type="chain" id="PRO_0000327754" description="Protein RER1 homolog">
    <location>
        <begin position="1"/>
        <end position="188"/>
    </location>
</feature>
<feature type="transmembrane region" description="Helical" evidence="2">
    <location>
        <begin position="33"/>
        <end position="53"/>
    </location>
</feature>
<feature type="transmembrane region" description="Helical" evidence="2">
    <location>
        <begin position="61"/>
        <end position="81"/>
    </location>
</feature>
<feature type="transmembrane region" description="Helical" evidence="2">
    <location>
        <begin position="115"/>
        <end position="135"/>
    </location>
</feature>
<feature type="transmembrane region" description="Helical" evidence="2">
    <location>
        <begin position="136"/>
        <end position="156"/>
    </location>
</feature>
<accession>Q54D10</accession>
<proteinExistence type="inferred from homology"/>
<name>RER1_DICDI</name>